<sequence>MAFSKNILDSLPPLISKQIFEGFFGFEKENIRVDSRGKLALTPHPRELGEKTSHPYITTDFSESQIEIITPPLPSIAESLGFLETLHDLVSIELKDEYLWPQSAPPILPEREEDIPIAHFGGEFREQEEYRLQLAKIYGRKRQMFSGIHFNISLPERFLELLHEEGKQEQPFAEFREDIYMKTVRNFLRHRWFLICLLGASPVIHKSYRKHCIDMLSPFAKDAYHFPYATSIRNNICGYRNTQDFHLNYSTLTDYRESLQELVEKKVLRDIRENYAPIRIKTTTDPKRINHLEIRLLDLNPFFKTGVNPLHAEIIHIFLIYCLLCPEETSFTSKEQETANRNQEQAATEGLNPGAIICDADGNEQRLDKQLAHCLQEIQQTVSPHLPPEYRAGMEELERLVQNQASRPTDTLLKEIKQEGFTEWHMKQALKFLKKSHDEQFIFHGLRDMELSTQLLLRRAALRGVSFEIMDRQENFVCLEQAGKREYVMQASRTSLDNYISVLSMENKVITKKILDQAGINTPKGRSYSSPSEALADYPYYRGRAIVIKPKSTNFGIGITIIKENNRHDFFAQGIAQAFKHEATVLIENFSSGKEYRFFIVNDQVVGILHRVPANVTGDGTSSVQVLVTEKNKNPLRGRGYRTPLEKIKLEETEEMFLASQGYSFATVPAKDQRIYLRENSNISTGGDSIDFTDKVPQSYKDIAVRAAQALQVKITGLDMMIDSLEEDAAEDNFSIIELNFNPAIHIHCHPYIGKNRHLDDKILDALGFTGAEEAGEKA</sequence>
<keyword id="KW-0067">ATP-binding</keyword>
<keyword id="KW-0317">Glutathione biosynthesis</keyword>
<keyword id="KW-0436">Ligase</keyword>
<keyword id="KW-0460">Magnesium</keyword>
<keyword id="KW-0464">Manganese</keyword>
<keyword id="KW-0479">Metal-binding</keyword>
<keyword id="KW-0511">Multifunctional enzyme</keyword>
<keyword id="KW-0547">Nucleotide-binding</keyword>
<keyword id="KW-1185">Reference proteome</keyword>
<name>GSHAB_DESPS</name>
<gene>
    <name evidence="2" type="primary">gshAB</name>
    <name evidence="2" type="synonym">gshF</name>
    <name type="ordered locus">DP1233</name>
</gene>
<protein>
    <recommendedName>
        <fullName evidence="2">Glutathione biosynthesis bifunctional protein GshAB</fullName>
    </recommendedName>
    <alternativeName>
        <fullName evidence="2">Gamma-GCS-GS</fullName>
        <shortName evidence="2">GCS-GS</shortName>
    </alternativeName>
    <domain>
        <recommendedName>
            <fullName evidence="2">Glutamate--cysteine ligase</fullName>
            <ecNumber evidence="2">6.3.2.2</ecNumber>
        </recommendedName>
        <alternativeName>
            <fullName evidence="2">Gamma-ECS</fullName>
            <shortName evidence="2">GCS</shortName>
        </alternativeName>
        <alternativeName>
            <fullName evidence="2">Gamma-glutamylcysteine synthetase</fullName>
        </alternativeName>
    </domain>
    <domain>
        <recommendedName>
            <fullName evidence="2">Glutathione synthetase</fullName>
            <ecNumber evidence="2">6.3.2.3</ecNumber>
        </recommendedName>
        <alternativeName>
            <fullName evidence="2">GSH synthetase</fullName>
            <shortName evidence="2">GS</shortName>
            <shortName evidence="2">GSH-S</shortName>
            <shortName evidence="2">GSHase</shortName>
        </alternativeName>
        <alternativeName>
            <fullName evidence="2">Glutathione synthase</fullName>
        </alternativeName>
    </domain>
</protein>
<organism>
    <name type="scientific">Desulfotalea psychrophila (strain LSv54 / DSM 12343)</name>
    <dbReference type="NCBI Taxonomy" id="177439"/>
    <lineage>
        <taxon>Bacteria</taxon>
        <taxon>Pseudomonadati</taxon>
        <taxon>Thermodesulfobacteriota</taxon>
        <taxon>Desulfobulbia</taxon>
        <taxon>Desulfobulbales</taxon>
        <taxon>Desulfocapsaceae</taxon>
        <taxon>Desulfotalea</taxon>
    </lineage>
</organism>
<evidence type="ECO:0000250" key="1"/>
<evidence type="ECO:0000255" key="2">
    <source>
        <dbReference type="HAMAP-Rule" id="MF_00782"/>
    </source>
</evidence>
<proteinExistence type="inferred from homology"/>
<dbReference type="EC" id="6.3.2.2" evidence="2"/>
<dbReference type="EC" id="6.3.2.3" evidence="2"/>
<dbReference type="EMBL" id="CR522870">
    <property type="protein sequence ID" value="CAG35962.1"/>
    <property type="molecule type" value="Genomic_DNA"/>
</dbReference>
<dbReference type="RefSeq" id="WP_011188474.1">
    <property type="nucleotide sequence ID" value="NC_006138.1"/>
</dbReference>
<dbReference type="SMR" id="Q6ANW2"/>
<dbReference type="STRING" id="177439.DP1233"/>
<dbReference type="KEGG" id="dps:DP1233"/>
<dbReference type="eggNOG" id="COG0189">
    <property type="taxonomic scope" value="Bacteria"/>
</dbReference>
<dbReference type="eggNOG" id="COG2918">
    <property type="taxonomic scope" value="Bacteria"/>
</dbReference>
<dbReference type="HOGENOM" id="CLU_020728_1_0_7"/>
<dbReference type="OrthoDB" id="9803907at2"/>
<dbReference type="UniPathway" id="UPA00142">
    <property type="reaction ID" value="UER00209"/>
</dbReference>
<dbReference type="UniPathway" id="UPA00142">
    <property type="reaction ID" value="UER00210"/>
</dbReference>
<dbReference type="Proteomes" id="UP000000602">
    <property type="component" value="Chromosome"/>
</dbReference>
<dbReference type="GO" id="GO:0005829">
    <property type="term" value="C:cytosol"/>
    <property type="evidence" value="ECO:0007669"/>
    <property type="project" value="TreeGrafter"/>
</dbReference>
<dbReference type="GO" id="GO:0005524">
    <property type="term" value="F:ATP binding"/>
    <property type="evidence" value="ECO:0007669"/>
    <property type="project" value="UniProtKB-KW"/>
</dbReference>
<dbReference type="GO" id="GO:0004357">
    <property type="term" value="F:glutamate-cysteine ligase activity"/>
    <property type="evidence" value="ECO:0007669"/>
    <property type="project" value="UniProtKB-EC"/>
</dbReference>
<dbReference type="GO" id="GO:0004363">
    <property type="term" value="F:glutathione synthase activity"/>
    <property type="evidence" value="ECO:0007669"/>
    <property type="project" value="UniProtKB-EC"/>
</dbReference>
<dbReference type="GO" id="GO:0046872">
    <property type="term" value="F:metal ion binding"/>
    <property type="evidence" value="ECO:0007669"/>
    <property type="project" value="UniProtKB-KW"/>
</dbReference>
<dbReference type="Gene3D" id="3.30.590.20">
    <property type="match status" value="1"/>
</dbReference>
<dbReference type="Gene3D" id="3.30.1490.20">
    <property type="entry name" value="ATP-grasp fold, A domain"/>
    <property type="match status" value="1"/>
</dbReference>
<dbReference type="Gene3D" id="3.30.470.20">
    <property type="entry name" value="ATP-grasp fold, B domain"/>
    <property type="match status" value="2"/>
</dbReference>
<dbReference type="HAMAP" id="MF_00782">
    <property type="entry name" value="Glut_biosynth"/>
    <property type="match status" value="1"/>
</dbReference>
<dbReference type="InterPro" id="IPR011761">
    <property type="entry name" value="ATP-grasp"/>
</dbReference>
<dbReference type="InterPro" id="IPR003806">
    <property type="entry name" value="ATP-grasp_PylC-type"/>
</dbReference>
<dbReference type="InterPro" id="IPR013815">
    <property type="entry name" value="ATP_grasp_subdomain_1"/>
</dbReference>
<dbReference type="InterPro" id="IPR014746">
    <property type="entry name" value="Gln_synth/guanido_kin_cat_dom"/>
</dbReference>
<dbReference type="InterPro" id="IPR007370">
    <property type="entry name" value="Glu_cys_ligase"/>
</dbReference>
<dbReference type="InterPro" id="IPR006335">
    <property type="entry name" value="Glut_biosynth"/>
</dbReference>
<dbReference type="InterPro" id="IPR006334">
    <property type="entry name" value="Glut_cys_ligase"/>
</dbReference>
<dbReference type="InterPro" id="IPR040657">
    <property type="entry name" value="GshAB_ATP-grasp"/>
</dbReference>
<dbReference type="NCBIfam" id="NF002688">
    <property type="entry name" value="PRK02471.1"/>
    <property type="match status" value="1"/>
</dbReference>
<dbReference type="PANTHER" id="PTHR38761">
    <property type="entry name" value="GLUTAMATE--CYSTEINE LIGASE"/>
    <property type="match status" value="1"/>
</dbReference>
<dbReference type="PANTHER" id="PTHR38761:SF1">
    <property type="entry name" value="GLUTAMATE--CYSTEINE LIGASE"/>
    <property type="match status" value="1"/>
</dbReference>
<dbReference type="Pfam" id="PF02655">
    <property type="entry name" value="ATP-grasp_3"/>
    <property type="match status" value="1"/>
</dbReference>
<dbReference type="Pfam" id="PF18419">
    <property type="entry name" value="ATP-grasp_6"/>
    <property type="match status" value="1"/>
</dbReference>
<dbReference type="Pfam" id="PF04262">
    <property type="entry name" value="Glu_cys_ligase"/>
    <property type="match status" value="1"/>
</dbReference>
<dbReference type="SUPFAM" id="SSF55931">
    <property type="entry name" value="Glutamine synthetase/guanido kinase"/>
    <property type="match status" value="1"/>
</dbReference>
<dbReference type="SUPFAM" id="SSF56059">
    <property type="entry name" value="Glutathione synthetase ATP-binding domain-like"/>
    <property type="match status" value="1"/>
</dbReference>
<dbReference type="PROSITE" id="PS50975">
    <property type="entry name" value="ATP_GRASP"/>
    <property type="match status" value="1"/>
</dbReference>
<feature type="chain" id="PRO_0000192550" description="Glutathione biosynthesis bifunctional protein GshAB">
    <location>
        <begin position="1"/>
        <end position="779"/>
    </location>
</feature>
<feature type="domain" description="ATP-grasp" evidence="2">
    <location>
        <begin position="512"/>
        <end position="768"/>
    </location>
</feature>
<feature type="region of interest" description="Glutamate--cysteine ligase">
    <location>
        <begin position="1"/>
        <end position="346"/>
    </location>
</feature>
<feature type="binding site" evidence="2">
    <location>
        <begin position="539"/>
        <end position="597"/>
    </location>
    <ligand>
        <name>ATP</name>
        <dbReference type="ChEBI" id="CHEBI:30616"/>
    </ligand>
</feature>
<feature type="binding site" evidence="2">
    <location>
        <position position="719"/>
    </location>
    <ligand>
        <name>Mg(2+)</name>
        <dbReference type="ChEBI" id="CHEBI:18420"/>
        <label>1</label>
    </ligand>
</feature>
<feature type="binding site" evidence="2">
    <location>
        <position position="719"/>
    </location>
    <ligand>
        <name>Mn(2+)</name>
        <dbReference type="ChEBI" id="CHEBI:29035"/>
        <label>1</label>
    </ligand>
</feature>
<feature type="binding site" evidence="2">
    <location>
        <position position="738"/>
    </location>
    <ligand>
        <name>Mg(2+)</name>
        <dbReference type="ChEBI" id="CHEBI:18420"/>
        <label>1</label>
    </ligand>
</feature>
<feature type="binding site" evidence="2">
    <location>
        <position position="738"/>
    </location>
    <ligand>
        <name>Mg(2+)</name>
        <dbReference type="ChEBI" id="CHEBI:18420"/>
        <label>2</label>
    </ligand>
</feature>
<feature type="binding site" evidence="2">
    <location>
        <position position="738"/>
    </location>
    <ligand>
        <name>Mn(2+)</name>
        <dbReference type="ChEBI" id="CHEBI:29035"/>
        <label>1</label>
    </ligand>
</feature>
<feature type="binding site" evidence="2">
    <location>
        <position position="738"/>
    </location>
    <ligand>
        <name>Mn(2+)</name>
        <dbReference type="ChEBI" id="CHEBI:29035"/>
        <label>2</label>
    </ligand>
</feature>
<feature type="binding site" evidence="2">
    <location>
        <position position="740"/>
    </location>
    <ligand>
        <name>Mg(2+)</name>
        <dbReference type="ChEBI" id="CHEBI:18420"/>
        <label>2</label>
    </ligand>
</feature>
<feature type="binding site" evidence="2">
    <location>
        <position position="740"/>
    </location>
    <ligand>
        <name>Mn(2+)</name>
        <dbReference type="ChEBI" id="CHEBI:29035"/>
        <label>2</label>
    </ligand>
</feature>
<reference key="1">
    <citation type="journal article" date="2004" name="Environ. Microbiol.">
        <title>The genome of Desulfotalea psychrophila, a sulfate-reducing bacterium from permanently cold Arctic sediments.</title>
        <authorList>
            <person name="Rabus R."/>
            <person name="Ruepp A."/>
            <person name="Frickey T."/>
            <person name="Rattei T."/>
            <person name="Fartmann B."/>
            <person name="Stark M."/>
            <person name="Bauer M."/>
            <person name="Zibat A."/>
            <person name="Lombardot T."/>
            <person name="Becker I."/>
            <person name="Amann J."/>
            <person name="Gellner K."/>
            <person name="Teeling H."/>
            <person name="Leuschner W.D."/>
            <person name="Gloeckner F.-O."/>
            <person name="Lupas A.N."/>
            <person name="Amann R."/>
            <person name="Klenk H.-P."/>
        </authorList>
    </citation>
    <scope>NUCLEOTIDE SEQUENCE [LARGE SCALE GENOMIC DNA]</scope>
    <source>
        <strain>DSM 12343 / LSv54</strain>
    </source>
</reference>
<accession>Q6ANW2</accession>
<comment type="function">
    <text evidence="2">Synthesizes glutathione from L-glutamate and L-cysteine via gamma-L-glutamyl-L-cysteine.</text>
</comment>
<comment type="catalytic activity">
    <reaction evidence="2">
        <text>L-cysteine + L-glutamate + ATP = gamma-L-glutamyl-L-cysteine + ADP + phosphate + H(+)</text>
        <dbReference type="Rhea" id="RHEA:13285"/>
        <dbReference type="ChEBI" id="CHEBI:15378"/>
        <dbReference type="ChEBI" id="CHEBI:29985"/>
        <dbReference type="ChEBI" id="CHEBI:30616"/>
        <dbReference type="ChEBI" id="CHEBI:35235"/>
        <dbReference type="ChEBI" id="CHEBI:43474"/>
        <dbReference type="ChEBI" id="CHEBI:58173"/>
        <dbReference type="ChEBI" id="CHEBI:456216"/>
        <dbReference type="EC" id="6.3.2.2"/>
    </reaction>
</comment>
<comment type="catalytic activity">
    <reaction evidence="2">
        <text>gamma-L-glutamyl-L-cysteine + glycine + ATP = glutathione + ADP + phosphate + H(+)</text>
        <dbReference type="Rhea" id="RHEA:13557"/>
        <dbReference type="ChEBI" id="CHEBI:15378"/>
        <dbReference type="ChEBI" id="CHEBI:30616"/>
        <dbReference type="ChEBI" id="CHEBI:43474"/>
        <dbReference type="ChEBI" id="CHEBI:57305"/>
        <dbReference type="ChEBI" id="CHEBI:57925"/>
        <dbReference type="ChEBI" id="CHEBI:58173"/>
        <dbReference type="ChEBI" id="CHEBI:456216"/>
        <dbReference type="EC" id="6.3.2.3"/>
    </reaction>
</comment>
<comment type="cofactor">
    <cofactor evidence="1">
        <name>Mg(2+)</name>
        <dbReference type="ChEBI" id="CHEBI:18420"/>
    </cofactor>
    <cofactor evidence="1">
        <name>Mn(2+)</name>
        <dbReference type="ChEBI" id="CHEBI:29035"/>
    </cofactor>
    <text evidence="1">Binds 2 magnesium or manganese ions per subunit.</text>
</comment>
<comment type="pathway">
    <text evidence="2">Sulfur metabolism; glutathione biosynthesis; glutathione from L-cysteine and L-glutamate: step 1/2.</text>
</comment>
<comment type="pathway">
    <text evidence="2">Sulfur metabolism; glutathione biosynthesis; glutathione from L-cysteine and L-glutamate: step 2/2.</text>
</comment>
<comment type="subunit">
    <text evidence="2">Monomer.</text>
</comment>
<comment type="similarity">
    <text evidence="2">In the N-terminal section; belongs to the glutamate--cysteine ligase type 1 family. Type 2 subfamily.</text>
</comment>